<feature type="chain" id="PRO_0000100011" description="Ribosomal large subunit pseudouridine synthase E">
    <location>
        <begin position="1"/>
        <end position="238"/>
    </location>
</feature>
<feature type="region of interest" description="Disordered" evidence="2">
    <location>
        <begin position="1"/>
        <end position="54"/>
    </location>
</feature>
<feature type="compositionally biased region" description="Basic residues" evidence="2">
    <location>
        <begin position="9"/>
        <end position="26"/>
    </location>
</feature>
<feature type="compositionally biased region" description="Basic residues" evidence="2">
    <location>
        <begin position="36"/>
        <end position="53"/>
    </location>
</feature>
<feature type="active site" description="Nucleophile" evidence="1">
    <location>
        <position position="101"/>
    </location>
</feature>
<name>RLUE_VIBPA</name>
<reference key="1">
    <citation type="journal article" date="2003" name="Lancet">
        <title>Genome sequence of Vibrio parahaemolyticus: a pathogenic mechanism distinct from that of V. cholerae.</title>
        <authorList>
            <person name="Makino K."/>
            <person name="Oshima K."/>
            <person name="Kurokawa K."/>
            <person name="Yokoyama K."/>
            <person name="Uda T."/>
            <person name="Tagomori K."/>
            <person name="Iijima Y."/>
            <person name="Najima M."/>
            <person name="Nakano M."/>
            <person name="Yamashita A."/>
            <person name="Kubota Y."/>
            <person name="Kimura S."/>
            <person name="Yasunaga T."/>
            <person name="Honda T."/>
            <person name="Shinagawa H."/>
            <person name="Hattori M."/>
            <person name="Iida T."/>
        </authorList>
    </citation>
    <scope>NUCLEOTIDE SEQUENCE [LARGE SCALE GENOMIC DNA]</scope>
    <source>
        <strain>RIMD 2210633</strain>
    </source>
</reference>
<accession>Q87QY8</accession>
<proteinExistence type="inferred from homology"/>
<dbReference type="EC" id="5.4.99.20"/>
<dbReference type="EMBL" id="BA000031">
    <property type="protein sequence ID" value="BAC59273.1"/>
    <property type="molecule type" value="Genomic_DNA"/>
</dbReference>
<dbReference type="RefSeq" id="NP_797389.1">
    <property type="nucleotide sequence ID" value="NC_004603.1"/>
</dbReference>
<dbReference type="RefSeq" id="WP_005481826.1">
    <property type="nucleotide sequence ID" value="NC_004603.1"/>
</dbReference>
<dbReference type="SMR" id="Q87QY8"/>
<dbReference type="GeneID" id="1188514"/>
<dbReference type="KEGG" id="vpa:VP1010"/>
<dbReference type="PATRIC" id="fig|223926.6.peg.957"/>
<dbReference type="eggNOG" id="COG1187">
    <property type="taxonomic scope" value="Bacteria"/>
</dbReference>
<dbReference type="HOGENOM" id="CLU_024979_8_0_6"/>
<dbReference type="Proteomes" id="UP000002493">
    <property type="component" value="Chromosome 1"/>
</dbReference>
<dbReference type="GO" id="GO:0160137">
    <property type="term" value="F:23S rRNA pseudouridine(2457) synthase activity"/>
    <property type="evidence" value="ECO:0007669"/>
    <property type="project" value="UniProtKB-EC"/>
</dbReference>
<dbReference type="GO" id="GO:0003723">
    <property type="term" value="F:RNA binding"/>
    <property type="evidence" value="ECO:0007669"/>
    <property type="project" value="InterPro"/>
</dbReference>
<dbReference type="GO" id="GO:0001522">
    <property type="term" value="P:pseudouridine synthesis"/>
    <property type="evidence" value="ECO:0007669"/>
    <property type="project" value="InterPro"/>
</dbReference>
<dbReference type="GO" id="GO:0006364">
    <property type="term" value="P:rRNA processing"/>
    <property type="evidence" value="ECO:0007669"/>
    <property type="project" value="UniProtKB-KW"/>
</dbReference>
<dbReference type="FunFam" id="3.30.70.1560:FF:000001">
    <property type="entry name" value="Pseudouridine synthase"/>
    <property type="match status" value="1"/>
</dbReference>
<dbReference type="Gene3D" id="3.30.70.1560">
    <property type="entry name" value="Alpha-L RNA-binding motif"/>
    <property type="match status" value="1"/>
</dbReference>
<dbReference type="Gene3D" id="3.30.70.580">
    <property type="entry name" value="Pseudouridine synthase I, catalytic domain, N-terminal subdomain"/>
    <property type="match status" value="1"/>
</dbReference>
<dbReference type="InterPro" id="IPR042092">
    <property type="entry name" value="PsdUridine_s_RsuA/RluB/E/F_cat"/>
</dbReference>
<dbReference type="InterPro" id="IPR020103">
    <property type="entry name" value="PsdUridine_synth_cat_dom_sf"/>
</dbReference>
<dbReference type="InterPro" id="IPR006145">
    <property type="entry name" value="PsdUridine_synth_RsuA/RluA"/>
</dbReference>
<dbReference type="InterPro" id="IPR000748">
    <property type="entry name" value="PsdUridine_synth_RsuA/RluB/E/F"/>
</dbReference>
<dbReference type="InterPro" id="IPR018496">
    <property type="entry name" value="PsdUridine_synth_RsuA/RluB_CS"/>
</dbReference>
<dbReference type="InterPro" id="IPR050343">
    <property type="entry name" value="RsuA_PseudoU_synthase"/>
</dbReference>
<dbReference type="InterPro" id="IPR020094">
    <property type="entry name" value="TruA/RsuA/RluB/E/F_N"/>
</dbReference>
<dbReference type="NCBIfam" id="TIGR00093">
    <property type="entry name" value="pseudouridine synthase"/>
    <property type="match status" value="1"/>
</dbReference>
<dbReference type="PANTHER" id="PTHR47683">
    <property type="entry name" value="PSEUDOURIDINE SYNTHASE FAMILY PROTEIN-RELATED"/>
    <property type="match status" value="1"/>
</dbReference>
<dbReference type="PANTHER" id="PTHR47683:SF2">
    <property type="entry name" value="RNA-BINDING S4 DOMAIN-CONTAINING PROTEIN"/>
    <property type="match status" value="1"/>
</dbReference>
<dbReference type="Pfam" id="PF00849">
    <property type="entry name" value="PseudoU_synth_2"/>
    <property type="match status" value="1"/>
</dbReference>
<dbReference type="SUPFAM" id="SSF55120">
    <property type="entry name" value="Pseudouridine synthase"/>
    <property type="match status" value="1"/>
</dbReference>
<dbReference type="PROSITE" id="PS01149">
    <property type="entry name" value="PSI_RSU"/>
    <property type="match status" value="1"/>
</dbReference>
<gene>
    <name type="primary">rluE</name>
    <name type="ordered locus">VP1010</name>
</gene>
<keyword id="KW-0413">Isomerase</keyword>
<keyword id="KW-0698">rRNA processing</keyword>
<organism>
    <name type="scientific">Vibrio parahaemolyticus serotype O3:K6 (strain RIMD 2210633)</name>
    <dbReference type="NCBI Taxonomy" id="223926"/>
    <lineage>
        <taxon>Bacteria</taxon>
        <taxon>Pseudomonadati</taxon>
        <taxon>Pseudomonadota</taxon>
        <taxon>Gammaproteobacteria</taxon>
        <taxon>Vibrionales</taxon>
        <taxon>Vibrionaceae</taxon>
        <taxon>Vibrio</taxon>
    </lineage>
</organism>
<evidence type="ECO:0000250" key="1"/>
<evidence type="ECO:0000256" key="2">
    <source>
        <dbReference type="SAM" id="MobiDB-lite"/>
    </source>
</evidence>
<evidence type="ECO:0000305" key="3"/>
<sequence length="238" mass="27025">MSSRTGHEKGRRTSQSKTGHFKRSGKPNRVEDQTTRRHPTRTAKAKAKAKANKPRVDLQNRKVIIFNKPYDTLSQFTDGDGRKTLADYIPVKDVYAAGRLDRDSEGLMVLTNDGILQAKLTQPKSKSPKTYWVQVDGAPQEQDLEKLRKGVELKDGMTLPAKVEVIDAPTIWERNPPVRFRANIPTTWLAITIIEGRNRQVRRMTAHIGFPTLRLVRYSMGDITLGDLQPGQWKEIQL</sequence>
<comment type="function">
    <text evidence="1">Responsible for synthesis of pseudouridine from uracil-2457 in 23S ribosomal RNA.</text>
</comment>
<comment type="catalytic activity">
    <reaction>
        <text>uridine(2457) in 23S rRNA = pseudouridine(2457) in 23S rRNA</text>
        <dbReference type="Rhea" id="RHEA:38871"/>
        <dbReference type="Rhea" id="RHEA-COMP:10091"/>
        <dbReference type="Rhea" id="RHEA-COMP:10092"/>
        <dbReference type="ChEBI" id="CHEBI:65314"/>
        <dbReference type="ChEBI" id="CHEBI:65315"/>
        <dbReference type="EC" id="5.4.99.20"/>
    </reaction>
</comment>
<comment type="similarity">
    <text evidence="3">Belongs to the pseudouridine synthase RsuA family.</text>
</comment>
<protein>
    <recommendedName>
        <fullName>Ribosomal large subunit pseudouridine synthase E</fullName>
        <ecNumber>5.4.99.20</ecNumber>
    </recommendedName>
    <alternativeName>
        <fullName>rRNA pseudouridylate synthase E</fullName>
    </alternativeName>
    <alternativeName>
        <fullName>rRNA-uridine isomerase E</fullName>
    </alternativeName>
</protein>